<sequence>MTSRLFALIPCAGTGSRSGAAMPKQYRTVAGRDMLHYSLAAFDACSEFAQTLVVIAPDDAHFDGRRFGGLRFAVRRSGGASRQASVLNGLHALAEFGARDDDWVLVHDAARPGITPALIRTLIGALKDDPVGGIMALPVADTLKRIDATSSDGRIARTEARDGLWQAQTPQMFRIGMLREAILRAQADGHDLTDEASAIEWLGHAPKLVQGSLRNFKVTYPEDFDLAEAILSRPAAAS</sequence>
<keyword id="KW-0414">Isoprene biosynthesis</keyword>
<keyword id="KW-0548">Nucleotidyltransferase</keyword>
<keyword id="KW-0808">Transferase</keyword>
<name>ISPD_PARPJ</name>
<proteinExistence type="inferred from homology"/>
<evidence type="ECO:0000255" key="1">
    <source>
        <dbReference type="HAMAP-Rule" id="MF_00108"/>
    </source>
</evidence>
<comment type="function">
    <text evidence="1">Catalyzes the formation of 4-diphosphocytidyl-2-C-methyl-D-erythritol from CTP and 2-C-methyl-D-erythritol 4-phosphate (MEP).</text>
</comment>
<comment type="catalytic activity">
    <reaction evidence="1">
        <text>2-C-methyl-D-erythritol 4-phosphate + CTP + H(+) = 4-CDP-2-C-methyl-D-erythritol + diphosphate</text>
        <dbReference type="Rhea" id="RHEA:13429"/>
        <dbReference type="ChEBI" id="CHEBI:15378"/>
        <dbReference type="ChEBI" id="CHEBI:33019"/>
        <dbReference type="ChEBI" id="CHEBI:37563"/>
        <dbReference type="ChEBI" id="CHEBI:57823"/>
        <dbReference type="ChEBI" id="CHEBI:58262"/>
        <dbReference type="EC" id="2.7.7.60"/>
    </reaction>
</comment>
<comment type="pathway">
    <text evidence="1">Isoprenoid biosynthesis; isopentenyl diphosphate biosynthesis via DXP pathway; isopentenyl diphosphate from 1-deoxy-D-xylulose 5-phosphate: step 2/6.</text>
</comment>
<comment type="similarity">
    <text evidence="1">Belongs to the IspD/TarI cytidylyltransferase family. IspD subfamily.</text>
</comment>
<reference key="1">
    <citation type="journal article" date="2011" name="J. Bacteriol.">
        <title>Complete genome sequence of the plant growth-promoting endophyte Burkholderia phytofirmans strain PsJN.</title>
        <authorList>
            <person name="Weilharter A."/>
            <person name="Mitter B."/>
            <person name="Shin M.V."/>
            <person name="Chain P.S."/>
            <person name="Nowak J."/>
            <person name="Sessitsch A."/>
        </authorList>
    </citation>
    <scope>NUCLEOTIDE SEQUENCE [LARGE SCALE GENOMIC DNA]</scope>
    <source>
        <strain>DSM 17436 / LMG 22146 / PsJN</strain>
    </source>
</reference>
<organism>
    <name type="scientific">Paraburkholderia phytofirmans (strain DSM 17436 / LMG 22146 / PsJN)</name>
    <name type="common">Burkholderia phytofirmans</name>
    <dbReference type="NCBI Taxonomy" id="398527"/>
    <lineage>
        <taxon>Bacteria</taxon>
        <taxon>Pseudomonadati</taxon>
        <taxon>Pseudomonadota</taxon>
        <taxon>Betaproteobacteria</taxon>
        <taxon>Burkholderiales</taxon>
        <taxon>Burkholderiaceae</taxon>
        <taxon>Paraburkholderia</taxon>
    </lineage>
</organism>
<dbReference type="EC" id="2.7.7.60" evidence="1"/>
<dbReference type="EMBL" id="CP001052">
    <property type="protein sequence ID" value="ACD16283.1"/>
    <property type="molecule type" value="Genomic_DNA"/>
</dbReference>
<dbReference type="RefSeq" id="WP_012432886.1">
    <property type="nucleotide sequence ID" value="NC_010681.1"/>
</dbReference>
<dbReference type="SMR" id="B2T3X2"/>
<dbReference type="STRING" id="398527.Bphyt_1875"/>
<dbReference type="KEGG" id="bpy:Bphyt_1875"/>
<dbReference type="eggNOG" id="COG1211">
    <property type="taxonomic scope" value="Bacteria"/>
</dbReference>
<dbReference type="HOGENOM" id="CLU_061281_3_0_4"/>
<dbReference type="OrthoDB" id="9806837at2"/>
<dbReference type="UniPathway" id="UPA00056">
    <property type="reaction ID" value="UER00093"/>
</dbReference>
<dbReference type="Proteomes" id="UP000001739">
    <property type="component" value="Chromosome 1"/>
</dbReference>
<dbReference type="GO" id="GO:0050518">
    <property type="term" value="F:2-C-methyl-D-erythritol 4-phosphate cytidylyltransferase activity"/>
    <property type="evidence" value="ECO:0007669"/>
    <property type="project" value="UniProtKB-UniRule"/>
</dbReference>
<dbReference type="GO" id="GO:0019288">
    <property type="term" value="P:isopentenyl diphosphate biosynthetic process, methylerythritol 4-phosphate pathway"/>
    <property type="evidence" value="ECO:0007669"/>
    <property type="project" value="UniProtKB-UniRule"/>
</dbReference>
<dbReference type="CDD" id="cd02516">
    <property type="entry name" value="CDP-ME_synthetase"/>
    <property type="match status" value="1"/>
</dbReference>
<dbReference type="FunFam" id="3.90.550.10:FF:000003">
    <property type="entry name" value="2-C-methyl-D-erythritol 4-phosphate cytidylyltransferase"/>
    <property type="match status" value="1"/>
</dbReference>
<dbReference type="Gene3D" id="3.90.550.10">
    <property type="entry name" value="Spore Coat Polysaccharide Biosynthesis Protein SpsA, Chain A"/>
    <property type="match status" value="1"/>
</dbReference>
<dbReference type="HAMAP" id="MF_00108">
    <property type="entry name" value="IspD"/>
    <property type="match status" value="1"/>
</dbReference>
<dbReference type="InterPro" id="IPR001228">
    <property type="entry name" value="IspD"/>
</dbReference>
<dbReference type="InterPro" id="IPR034683">
    <property type="entry name" value="IspD/TarI"/>
</dbReference>
<dbReference type="InterPro" id="IPR050088">
    <property type="entry name" value="IspD/TarI_cytidylyltransf_bact"/>
</dbReference>
<dbReference type="InterPro" id="IPR018294">
    <property type="entry name" value="ISPD_synthase_CS"/>
</dbReference>
<dbReference type="InterPro" id="IPR029044">
    <property type="entry name" value="Nucleotide-diphossugar_trans"/>
</dbReference>
<dbReference type="NCBIfam" id="TIGR00453">
    <property type="entry name" value="ispD"/>
    <property type="match status" value="1"/>
</dbReference>
<dbReference type="PANTHER" id="PTHR32125">
    <property type="entry name" value="2-C-METHYL-D-ERYTHRITOL 4-PHOSPHATE CYTIDYLYLTRANSFERASE, CHLOROPLASTIC"/>
    <property type="match status" value="1"/>
</dbReference>
<dbReference type="PANTHER" id="PTHR32125:SF4">
    <property type="entry name" value="2-C-METHYL-D-ERYTHRITOL 4-PHOSPHATE CYTIDYLYLTRANSFERASE, CHLOROPLASTIC"/>
    <property type="match status" value="1"/>
</dbReference>
<dbReference type="Pfam" id="PF01128">
    <property type="entry name" value="IspD"/>
    <property type="match status" value="1"/>
</dbReference>
<dbReference type="SUPFAM" id="SSF53448">
    <property type="entry name" value="Nucleotide-diphospho-sugar transferases"/>
    <property type="match status" value="1"/>
</dbReference>
<dbReference type="PROSITE" id="PS01295">
    <property type="entry name" value="ISPD"/>
    <property type="match status" value="1"/>
</dbReference>
<feature type="chain" id="PRO_1000094315" description="2-C-methyl-D-erythritol 4-phosphate cytidylyltransferase">
    <location>
        <begin position="1"/>
        <end position="238"/>
    </location>
</feature>
<feature type="site" description="Transition state stabilizer" evidence="1">
    <location>
        <position position="17"/>
    </location>
</feature>
<feature type="site" description="Transition state stabilizer" evidence="1">
    <location>
        <position position="24"/>
    </location>
</feature>
<feature type="site" description="Positions MEP for the nucleophilic attack" evidence="1">
    <location>
        <position position="161"/>
    </location>
</feature>
<feature type="site" description="Positions MEP for the nucleophilic attack" evidence="1">
    <location>
        <position position="217"/>
    </location>
</feature>
<gene>
    <name evidence="1" type="primary">ispD</name>
    <name type="ordered locus">Bphyt_1875</name>
</gene>
<accession>B2T3X2</accession>
<protein>
    <recommendedName>
        <fullName evidence="1">2-C-methyl-D-erythritol 4-phosphate cytidylyltransferase</fullName>
        <ecNumber evidence="1">2.7.7.60</ecNumber>
    </recommendedName>
    <alternativeName>
        <fullName evidence="1">4-diphosphocytidyl-2C-methyl-D-erythritol synthase</fullName>
    </alternativeName>
    <alternativeName>
        <fullName evidence="1">MEP cytidylyltransferase</fullName>
        <shortName evidence="1">MCT</shortName>
    </alternativeName>
</protein>